<proteinExistence type="inferred from homology"/>
<organismHost>
    <name type="scientific">Bos taurus</name>
    <name type="common">Bovine</name>
    <dbReference type="NCBI Taxonomy" id="9913"/>
</organismHost>
<accession>P0C6T8</accession>
<accession>Q91A29</accession>
<sequence>MSKINKYGLELHWAPEFPWMFEDAEEKLDNPSSSEVDIVCSTTAQKLETGGICPENHVMVDCRRLLKQECCVQSSLIREIVMNTRPYDLEVLLQDALQSREAVLVTPPLGMSLEACYVRGCNPNGWTMGLFRRRSVCNTGRCAVNKHVAYQLYMIDPAGVCFGAGQFVGWVIPLAFMPVQSRKFIVPWVMYLRKCGEKGAYNKDHKRGGFEHVYNFKVEDAYDLVHDEPKGKFSKKAYALIRGYRGVKPLLYVDQYGCDYTGGLADGLEAYADKTLQEMKALFPIWSQELPFDVTVAWHVVRDPRYVMRLQSASTIRSVAYVANPTEDLCDGSVVIKEPVHVYADDSIILRQHNLVDIMSCFYMEADAVVNAFYGVDLKDCGFVMQFGYIDCEQDLCDFKGWVPGNMIDGFACTTCGHVYETGDLLAQSSGVLPVNPVLHTKSAAGYGGFGCKDSFTLYGQTVVYFGGCVYWSPARNIWIPILKSSVKSYDGLVYTGVVGCKAIVKETNLICKALYLDYVQHKCGNLHQRELLGVSDVWHKQLLLNRGVYKPLLENIDYFNMRRAKFSLETFTVCADGFMPFLLDDLVPRAYYLAVSGQAFCDYADKICHAVVSKSKELLDVSLDSLSAAIHYLNSKIVDLAQHFSDFGTSFVSKIVHFFKTFTTSTALAFAWVLFHVLHGAYIVVESDIYFVKNIPRYASAVAQAFRSVAKVVLDSLRVTFIDGLSCFKIGRRRICLSGSKIYEVERGLLHSSQLPLDVYDLTMPSQVQKAKQKPIYLKGSGSDFSLADSVVEVVTTSLTPCGYSEPPKVADKICIVDNVYMAKAGDKYYPVVVDGHVGLLDQAWRVPCAGRRVTFKEQPTVNEIASTPKTIKVFYELDKDFNTILNTACGVFEVDDTVDMEEFYAVVIDAIEEKLSPCKELEGVGAKVSAFLQKLEDNSLFLFDEAGEEVLASKLYCAFTAPEDDDFLEESGVEEDDVEGEETDLTVTSAGEPCVASEQEESSEILEDTLDDGPCVETSDSQVEEDVEMSDFADLESVIQDYENVCFEFYTTEPEFVKVLDLYVPKATRNNCWLRSVLAVMQKLPCQFKDKNLQDLWVLYKQQYSQLFVDTLVNKIPANIVVPQGGYVADFAYWFLTLCDWQCVAYWKCIKCDLALKLKGLDAMFFYGDVVSHVCKCGESMVLIDVDVPFTAHFALKDKLFCAFITKRSVYKAACVVDVNDSHSMAVVDGKQIDDHRVTSITSDKFDFIIGHGMSFSMTTFEIAQLYGSCITPNVCFVKGDIIKVSKRVKAEVVVNPANGHMAHGGGVAKAIAVAAGQQFVKETTDMVKSKGVCATGDCYVSTGGKLCKTVLNVVGPDARTQGKQSYALLERVYKHLNKYDCVVTTLISAGIFSVPSDVSLTYLLGTAEKQVVLVSNNQEDFDLISKCQITAVEGTKKLAERLSFNVGRSIVYETDANKLILSNDVAFVSTFNVLQDVLSLRHDIALDDDARTFVQSNVDVVPEGWRVVNKFYQINGVRTVKYFECPGGIDICSQDKVFGYVQQGSFNKATVAQIKALFLDKVDILLTVDGVNFTNRFVPVGESFGKSLGNVFCDGVNVTKHKCDINYKGKVFFQFDNLSSEDLKAVRSSFNFDQKELLAYYNMLVNCSKWQVVFNGKYFTFKQANNNCFVNVSCLMLQSLNLKFKIVQWQEAWLEFRSGRPARFVSLVLAKGGFKFGDPADSRDFLRVVFSQVDLTGAICDFEIACKCGVKQEQRTGVDAVMHFGTLSREDLEIGYTVDCSCGKKLIHCVRFDVPFLICSNTPASVKLPKGVGSANIFKGDKVGHYVHVKCEQSYQLYDASNVKKVTDVTGNLSDCLYLKNLKQTFKSVLTTYYLDDVKKIEYNPDLSQYYCDGGKYYTQRIIKAQFKTFEKVDGVYTNFKLIGHTICDILNAKLGFDSSKEFVEYKVTEWPTATGDVVLATDDLYVKRYERGCITFGKPVIWLSHEQASLNSLTYFNRPLLVDENKFDVLKVDDVDDGGDISESDAKESKEINIIKLSGVKKPFKVEDSVIVNDDTSEIKYVKSLSIVDVYDMWLTGCRYVVRTANALSMAVNVPTIRKFIKFGMTLVSIPIDLLNLREIKPVFNVVKAVRNKISACFNFIKWLFVLLFGWIKISADNKVIYTTEVASKLTCKLVALAFKNAFLTFKWSVVARGACIIATIFLLWFNFIYANVIFSDFYLPKIGFLPTFVGKIAQWIKSTFSLVTICDLYSIQDVGFKNQYCNGSIACQFCLAGFDMLDNYKAIDVVQYEADRRAFVDYTGVLKIVIELIVSYALYTAWFYPLFALISIQILTTWLPELFMLSTLHWSVRLLVSLANMLPAHVFMRFYIIIASFIKLFILFRHVAYGCSKPGCLFCYKRNRSLRVKCSTIVGGMIRYYDVMANGGTGFCSKHQWNCIDCDSYKPGNTFITVEAALDLSKELKRPIQPTDVAYHTVTDVKQVGCYMRLFYERDGQRTYDDVNASLFVDYSNLLHSKVKGVPNMHVVVVENDADKANFLNAAVFYAQSLFRPILMVDKNLITTANTGTSVTETMFDVYVDTFLSMFDVDKKSLNALIATAHSSIKQGTQICKVLDTFLSCARKSCSIDSDVDTKCLADSVMSAVSAGLELTDESCNNLVPTYLKGDNIVAADLGVLIQNSAKHVQGNVAKIAGVSCIWSVDAFNQLSSDFQHKLKKACCKTGLKLKLTYNKQMANVSVLTTPFSLKGGAVFSYFVYVCFLLSLVCFIGLWCLMPTYTVHKSDFQLPVYASYKVLDNGVIRDVSVEDVCFANKFEQFDQWYESTFGLSYYSNSMACPIVVAVVDQDLGSTVFNVPTKVLRYGYHVLHFITHALSADGVQCYTPHSQISYSNFYASGCVLSSACTMFAMADGSPQPYCYTEGLMQNASLYSSLVPHVRYNLANAKGFIRFPEVLREGLVRIVRTRSMSYCRVGLCEEADEGICFNFNGSWVLNNDYYRSLPGTFCGRDVFDLIYQLFKGLAQPVDFLALTASSIAGAILAVIVVLVFYYLIKLKRAFGDYTSIVFVNVIVWCVNFMMLFVFQVYPTLSCVYAICYFYATLYFPSEISVIMHLQWLVMYGTIMPLWFCLLYISVVVSNHAFWVFAYCRRLGTSVRSDGTFEEMALTTFMITKDSYCKLKNSLSDVAFNRYLSLYNKYRYYSGKMDTAAYREAACSQLAKAMDTFTNNNGSDVLYQPPTASVSTSFLQSGIVKMVNPTSKVEPCIVSVTYGNMTLNGLWLDDKVYCPRHVICSASDMTNPDYTNLLCRVTSSDFTVLFDRLSLTVMSYQMQGCMLVLTVTLQNSRTPKYTFGVVKPGETFTVLAAYNGKPQGAFHVTMRSSYTIKGSFLCGSCGSVGYVLMGDCVKFVYMHQLELSTGCHTGTDFNGDFYGPYKDAQVVQLPVQDYIQSVNFVAWLYAAILNNCNWFVQSDKCSVEDFNVWALSNGFSQVKSDLVIDALASMTGVSLETLLAAIKRLKNGFQGRQIMGSCSFEDELTPSDVYQQLAGIKLQSKRTRLVKGIVCWIMASTFLFSCIITAFVKWTMFMYVTTNMLSITFCALCVISLAMLLVKHKHLYLTMYIIPVLFTLLYNNYLVVYKQTFRGYVYAWLSYYVPSVEYTYTDEVIYGMLLLIGMVFVTLRSINHDLFSFIMFVGRVISVVSLWYMGSNLEEEILLMLASLFGTYTWTTALSMAAAKVIAKWVAVNVLYFTDIPQIKIVLVCYLFIGYIISCYWGLFSLMNSLFRMPLGVYNYKISVQELRYMNANGLRPPKNSFEALMLNFKLLGIGGVPIIEVSQFQSKLTDVKCANVVLLNCLQHLHVASNSKLWQYCSTLHNEILATSDLGVAFEKLAQLLIVLFANPAAVDSKCLTSIEEVCDDYAKDNTVLQALQSEFVNMASFVEYEVAKKNLDEARSSGSANQQQLKQLEKACNIAKSAYERDRAVARKLERMADLALTNMYKEARINDKKSKVVSALQTMLFSMVRKLDNQALNSILDNAVKGCVPLNAIPSLAANTLTIIVPDKSVYDQVVDNVYVTYAGNVWQIQTIQDSDGTNKQLNEISDDCNWPLVIIANRHNEVSATVLQNNELMPAKLKTQVVNSGPDQTCNTPTQCYYNNSNNGKIVYAILSDVDGLKYTKILKDDGNFVVLELDPPCKFTVQDVKGLKIKYLYFVKGCNTLARGWVVGTISSTVRLQAGTATEYASNSSILSLCAFSVDPKKTYLDFIQQGGTPIANCVKMLCDHAGTGMAITVKPDATTNQDSYGGASVCIYCRARVEHPDVDGLCKLRGKFVQVPVGIKDPVSYVLTHDVCQVCGFWRDGSCSCVSTDTTVQSKDTNFLNGFGVRV</sequence>
<keyword id="KW-1072">Activation of host autophagy by virus</keyword>
<keyword id="KW-1132">Decay of host mRNAs by virus</keyword>
<keyword id="KW-1015">Disulfide bond</keyword>
<keyword id="KW-0255">Endonuclease</keyword>
<keyword id="KW-1262">Eukaryotic host gene expression shutoff by virus</keyword>
<keyword id="KW-1193">Eukaryotic host translation shutoff by virus</keyword>
<keyword id="KW-1035">Host cytoplasm</keyword>
<keyword id="KW-1190">Host gene expression shutoff by virus</keyword>
<keyword id="KW-1043">Host membrane</keyword>
<keyword id="KW-1192">Host mRNA suppression by virus</keyword>
<keyword id="KW-0945">Host-virus interaction</keyword>
<keyword id="KW-0378">Hydrolase</keyword>
<keyword id="KW-1090">Inhibition of host innate immune response by virus</keyword>
<keyword id="KW-1114">Inhibition of host interferon signaling pathway by virus</keyword>
<keyword id="KW-1092">Inhibition of host IRF3 by virus</keyword>
<keyword id="KW-1095">Inhibition of host ISG15 by virus</keyword>
<keyword id="KW-1113">Inhibition of host RLR pathway by virus</keyword>
<keyword id="KW-0922">Interferon antiviral system evasion</keyword>
<keyword id="KW-0472">Membrane</keyword>
<keyword id="KW-0479">Metal-binding</keyword>
<keyword id="KW-0489">Methyltransferase</keyword>
<keyword id="KW-1127">Modulation of host ubiquitin pathway by viral deubiquitinase</keyword>
<keyword id="KW-1130">Modulation of host ubiquitin pathway by virus</keyword>
<keyword id="KW-0540">Nuclease</keyword>
<keyword id="KW-0645">Protease</keyword>
<keyword id="KW-0677">Repeat</keyword>
<keyword id="KW-0688">Ribosomal frameshifting</keyword>
<keyword id="KW-0694">RNA-binding</keyword>
<keyword id="KW-0788">Thiol protease</keyword>
<keyword id="KW-0808">Transferase</keyword>
<keyword id="KW-0812">Transmembrane</keyword>
<keyword id="KW-1133">Transmembrane helix</keyword>
<keyword id="KW-0833">Ubl conjugation pathway</keyword>
<keyword id="KW-0899">Viral immunoevasion</keyword>
<keyword id="KW-0862">Zinc</keyword>
<keyword id="KW-0863">Zinc-finger</keyword>
<dbReference type="EC" id="3.4.19.12"/>
<dbReference type="EC" id="3.4.22.-"/>
<dbReference type="EC" id="3.4.22.69"/>
<dbReference type="EC" id="2.7.7.50"/>
<dbReference type="EMBL" id="AF391541">
    <property type="protein sequence ID" value="AAK83364.1"/>
    <property type="molecule type" value="Genomic_RNA"/>
</dbReference>
<dbReference type="SMR" id="P0C6T8"/>
<dbReference type="Proteomes" id="UP000008570">
    <property type="component" value="Segment"/>
</dbReference>
<dbReference type="GO" id="GO:0033644">
    <property type="term" value="C:host cell membrane"/>
    <property type="evidence" value="ECO:0007669"/>
    <property type="project" value="UniProtKB-SubCell"/>
</dbReference>
<dbReference type="GO" id="GO:0044220">
    <property type="term" value="C:host cell perinuclear region of cytoplasm"/>
    <property type="evidence" value="ECO:0007669"/>
    <property type="project" value="UniProtKB-SubCell"/>
</dbReference>
<dbReference type="GO" id="GO:0016020">
    <property type="term" value="C:membrane"/>
    <property type="evidence" value="ECO:0007669"/>
    <property type="project" value="UniProtKB-KW"/>
</dbReference>
<dbReference type="GO" id="GO:0004843">
    <property type="term" value="F:cysteine-type deubiquitinase activity"/>
    <property type="evidence" value="ECO:0007669"/>
    <property type="project" value="UniProtKB-EC"/>
</dbReference>
<dbReference type="GO" id="GO:0004197">
    <property type="term" value="F:cysteine-type endopeptidase activity"/>
    <property type="evidence" value="ECO:0007669"/>
    <property type="project" value="InterPro"/>
</dbReference>
<dbReference type="GO" id="GO:0004519">
    <property type="term" value="F:endonuclease activity"/>
    <property type="evidence" value="ECO:0007669"/>
    <property type="project" value="UniProtKB-KW"/>
</dbReference>
<dbReference type="GO" id="GO:0008168">
    <property type="term" value="F:methyltransferase activity"/>
    <property type="evidence" value="ECO:0007669"/>
    <property type="project" value="UniProtKB-KW"/>
</dbReference>
<dbReference type="GO" id="GO:0008242">
    <property type="term" value="F:omega peptidase activity"/>
    <property type="evidence" value="ECO:0007669"/>
    <property type="project" value="InterPro"/>
</dbReference>
<dbReference type="GO" id="GO:0003968">
    <property type="term" value="F:RNA-directed RNA polymerase activity"/>
    <property type="evidence" value="ECO:0007669"/>
    <property type="project" value="InterPro"/>
</dbReference>
<dbReference type="GO" id="GO:0003727">
    <property type="term" value="F:single-stranded RNA binding"/>
    <property type="evidence" value="ECO:0007669"/>
    <property type="project" value="InterPro"/>
</dbReference>
<dbReference type="GO" id="GO:0008270">
    <property type="term" value="F:zinc ion binding"/>
    <property type="evidence" value="ECO:0007669"/>
    <property type="project" value="UniProtKB-KW"/>
</dbReference>
<dbReference type="GO" id="GO:0032259">
    <property type="term" value="P:methylation"/>
    <property type="evidence" value="ECO:0007669"/>
    <property type="project" value="UniProtKB-KW"/>
</dbReference>
<dbReference type="GO" id="GO:0006508">
    <property type="term" value="P:proteolysis"/>
    <property type="evidence" value="ECO:0007669"/>
    <property type="project" value="UniProtKB-KW"/>
</dbReference>
<dbReference type="GO" id="GO:0010506">
    <property type="term" value="P:regulation of autophagy"/>
    <property type="evidence" value="ECO:0007669"/>
    <property type="project" value="InterPro"/>
</dbReference>
<dbReference type="GO" id="GO:0039520">
    <property type="term" value="P:symbiont-mediated activation of host autophagy"/>
    <property type="evidence" value="ECO:0007669"/>
    <property type="project" value="UniProtKB-KW"/>
</dbReference>
<dbReference type="GO" id="GO:0039595">
    <property type="term" value="P:symbiont-mediated degradation of host mRNA"/>
    <property type="evidence" value="ECO:0007669"/>
    <property type="project" value="UniProtKB-KW"/>
</dbReference>
<dbReference type="GO" id="GO:0039648">
    <property type="term" value="P:symbiont-mediated perturbation of host ubiquitin-like protein modification"/>
    <property type="evidence" value="ECO:0007669"/>
    <property type="project" value="UniProtKB-KW"/>
</dbReference>
<dbReference type="GO" id="GO:0039548">
    <property type="term" value="P:symbiont-mediated suppression of host cytoplasmic pattern recognition receptor signaling pathway via inhibition of IRF3 activity"/>
    <property type="evidence" value="ECO:0007669"/>
    <property type="project" value="UniProtKB-KW"/>
</dbReference>
<dbReference type="GO" id="GO:0039657">
    <property type="term" value="P:symbiont-mediated suppression of host gene expression"/>
    <property type="evidence" value="ECO:0007669"/>
    <property type="project" value="UniProtKB-KW"/>
</dbReference>
<dbReference type="GO" id="GO:0039579">
    <property type="term" value="P:symbiont-mediated suppression of host ISG15-protein conjugation"/>
    <property type="evidence" value="ECO:0007669"/>
    <property type="project" value="UniProtKB-KW"/>
</dbReference>
<dbReference type="GO" id="GO:0039502">
    <property type="term" value="P:symbiont-mediated suppression of host type I interferon-mediated signaling pathway"/>
    <property type="evidence" value="ECO:0007669"/>
    <property type="project" value="UniProtKB-KW"/>
</dbReference>
<dbReference type="GO" id="GO:0019079">
    <property type="term" value="P:viral genome replication"/>
    <property type="evidence" value="ECO:0007669"/>
    <property type="project" value="InterPro"/>
</dbReference>
<dbReference type="GO" id="GO:0019082">
    <property type="term" value="P:viral protein processing"/>
    <property type="evidence" value="ECO:0007669"/>
    <property type="project" value="InterPro"/>
</dbReference>
<dbReference type="GO" id="GO:0075523">
    <property type="term" value="P:viral translational frameshifting"/>
    <property type="evidence" value="ECO:0007669"/>
    <property type="project" value="UniProtKB-KW"/>
</dbReference>
<dbReference type="CDD" id="cd21901">
    <property type="entry name" value="alpha_betaCoV_Nsp10"/>
    <property type="match status" value="1"/>
</dbReference>
<dbReference type="CDD" id="cd21560">
    <property type="entry name" value="betaCoV-Nsp6"/>
    <property type="match status" value="1"/>
</dbReference>
<dbReference type="CDD" id="cd21519">
    <property type="entry name" value="betaCoV_Nsp2_MHV-like"/>
    <property type="match status" value="1"/>
</dbReference>
<dbReference type="CDD" id="cd21666">
    <property type="entry name" value="betaCoV_Nsp5_Mpro"/>
    <property type="match status" value="1"/>
</dbReference>
<dbReference type="CDD" id="cd21827">
    <property type="entry name" value="betaCoV_Nsp7"/>
    <property type="match status" value="1"/>
</dbReference>
<dbReference type="CDD" id="cd21831">
    <property type="entry name" value="betaCoV_Nsp8"/>
    <property type="match status" value="1"/>
</dbReference>
<dbReference type="CDD" id="cd21898">
    <property type="entry name" value="betaCoV_Nsp9"/>
    <property type="match status" value="1"/>
</dbReference>
<dbReference type="CDD" id="cd21732">
    <property type="entry name" value="betaCoV_PLPro"/>
    <property type="match status" value="1"/>
</dbReference>
<dbReference type="CDD" id="cd21473">
    <property type="entry name" value="cv_Nsp4_TM"/>
    <property type="match status" value="1"/>
</dbReference>
<dbReference type="CDD" id="cd21524">
    <property type="entry name" value="DPUP_MHV_Nsp3"/>
    <property type="match status" value="1"/>
</dbReference>
<dbReference type="CDD" id="cd21557">
    <property type="entry name" value="Macro_X_Nsp3-like"/>
    <property type="match status" value="1"/>
</dbReference>
<dbReference type="CDD" id="cd21879">
    <property type="entry name" value="MHV-like_Nsp1"/>
    <property type="match status" value="1"/>
</dbReference>
<dbReference type="CDD" id="cd21812">
    <property type="entry name" value="MHV-like_Nsp3_betaSM"/>
    <property type="match status" value="1"/>
</dbReference>
<dbReference type="CDD" id="cd21824">
    <property type="entry name" value="MHV-like_Nsp3_NAB"/>
    <property type="match status" value="1"/>
</dbReference>
<dbReference type="CDD" id="cd21714">
    <property type="entry name" value="TM_Y_MHV-like_Nsp3_C"/>
    <property type="match status" value="1"/>
</dbReference>
<dbReference type="CDD" id="cd21467">
    <property type="entry name" value="Ubl1_cv_Nsp3_N-like"/>
    <property type="match status" value="1"/>
</dbReference>
<dbReference type="FunFam" id="1.10.150.420:FF:000001">
    <property type="entry name" value="Replicase polyprotein"/>
    <property type="match status" value="1"/>
</dbReference>
<dbReference type="Gene3D" id="1.10.8.1190">
    <property type="match status" value="2"/>
</dbReference>
<dbReference type="Gene3D" id="2.60.120.1680">
    <property type="match status" value="1"/>
</dbReference>
<dbReference type="Gene3D" id="3.10.20.350">
    <property type="match status" value="1"/>
</dbReference>
<dbReference type="Gene3D" id="3.10.20.540">
    <property type="match status" value="1"/>
</dbReference>
<dbReference type="Gene3D" id="6.10.140.2090">
    <property type="match status" value="1"/>
</dbReference>
<dbReference type="Gene3D" id="1.10.150.420">
    <property type="entry name" value="Coronavirus nonstructural protein 4 C-terminus"/>
    <property type="match status" value="1"/>
</dbReference>
<dbReference type="Gene3D" id="3.40.220.10">
    <property type="entry name" value="Leucine Aminopeptidase, subunit E, domain 1"/>
    <property type="match status" value="1"/>
</dbReference>
<dbReference type="Gene3D" id="1.10.1840.10">
    <property type="entry name" value="main proteinase (3clpro) structure, domain 3"/>
    <property type="match status" value="1"/>
</dbReference>
<dbReference type="Gene3D" id="1.10.8.370">
    <property type="entry name" value="nsp7 replicase"/>
    <property type="match status" value="1"/>
</dbReference>
<dbReference type="Gene3D" id="3.30.70.3540">
    <property type="entry name" value="Nsp8 replicase, head domain"/>
    <property type="match status" value="1"/>
</dbReference>
<dbReference type="Gene3D" id="2.40.10.250">
    <property type="entry name" value="Replicase NSP9"/>
    <property type="match status" value="1"/>
</dbReference>
<dbReference type="Gene3D" id="3.40.50.11020">
    <property type="entry name" value="Replicase polyprotein, nucleic acid-binding domain"/>
    <property type="match status" value="1"/>
</dbReference>
<dbReference type="Gene3D" id="2.40.10.10">
    <property type="entry name" value="Trypsin-like serine proteases"/>
    <property type="match status" value="2"/>
</dbReference>
<dbReference type="InterPro" id="IPR046443">
    <property type="entry name" value="a/bCoV_NSP1_glob"/>
</dbReference>
<dbReference type="InterPro" id="IPR022570">
    <property type="entry name" value="B-CoV_A_NSP1"/>
</dbReference>
<dbReference type="InterPro" id="IPR046442">
    <property type="entry name" value="bCoV_NSP1_C"/>
</dbReference>
<dbReference type="InterPro" id="IPR043613">
    <property type="entry name" value="CoV_NSP2_C"/>
</dbReference>
<dbReference type="InterPro" id="IPR047573">
    <property type="entry name" value="CoV_NSP2_M"/>
</dbReference>
<dbReference type="InterPro" id="IPR049894">
    <property type="entry name" value="COV_NSP3_3ECTO"/>
</dbReference>
<dbReference type="InterPro" id="IPR043611">
    <property type="entry name" value="CoV_NSP3_C"/>
</dbReference>
<dbReference type="InterPro" id="IPR047566">
    <property type="entry name" value="CoV_NSP3_Y"/>
</dbReference>
<dbReference type="InterPro" id="IPR032505">
    <property type="entry name" value="CoV_NSP4_C"/>
</dbReference>
<dbReference type="InterPro" id="IPR043612">
    <property type="entry name" value="CoV_NSP4_N"/>
</dbReference>
<dbReference type="InterPro" id="IPR022733">
    <property type="entry name" value="DPUP_SUD_C_bCoV"/>
</dbReference>
<dbReference type="InterPro" id="IPR002589">
    <property type="entry name" value="Macro_dom"/>
</dbReference>
<dbReference type="InterPro" id="IPR043472">
    <property type="entry name" value="Macro_dom-like"/>
</dbReference>
<dbReference type="InterPro" id="IPR044371">
    <property type="entry name" value="Macro_X_NSP3-like"/>
</dbReference>
<dbReference type="InterPro" id="IPR036333">
    <property type="entry name" value="NSP10_sf_CoV"/>
</dbReference>
<dbReference type="InterPro" id="IPR044384">
    <property type="entry name" value="NSP2_MHV-like"/>
</dbReference>
<dbReference type="InterPro" id="IPR043615">
    <property type="entry name" value="NSP2_N_CoV"/>
</dbReference>
<dbReference type="InterPro" id="IPR044381">
    <property type="entry name" value="NSP3_DPUP_MHV"/>
</dbReference>
<dbReference type="InterPro" id="IPR047567">
    <property type="entry name" value="NSP3_G2M_bCoV"/>
</dbReference>
<dbReference type="InterPro" id="IPR032592">
    <property type="entry name" value="NSP3_NAB_bCoV"/>
</dbReference>
<dbReference type="InterPro" id="IPR042570">
    <property type="entry name" value="NSP3_NAB_bCoV_sf"/>
</dbReference>
<dbReference type="InterPro" id="IPR044357">
    <property type="entry name" value="NSP3_Ubl1_dom_CoV"/>
</dbReference>
<dbReference type="InterPro" id="IPR044353">
    <property type="entry name" value="Nsp3_Ubl2_dom_CoV"/>
</dbReference>
<dbReference type="InterPro" id="IPR038083">
    <property type="entry name" value="NSP3A-like"/>
</dbReference>
<dbReference type="InterPro" id="IPR038123">
    <property type="entry name" value="NSP4_C_sf_CoV"/>
</dbReference>
<dbReference type="InterPro" id="IPR044367">
    <property type="entry name" value="NSP6_betaCoV"/>
</dbReference>
<dbReference type="InterPro" id="IPR043610">
    <property type="entry name" value="NSP6_CoV"/>
</dbReference>
<dbReference type="InterPro" id="IPR014828">
    <property type="entry name" value="NSP7_CoV"/>
</dbReference>
<dbReference type="InterPro" id="IPR037204">
    <property type="entry name" value="NSP7_sf_CoV"/>
</dbReference>
<dbReference type="InterPro" id="IPR014829">
    <property type="entry name" value="NSP8_CoV"/>
</dbReference>
<dbReference type="InterPro" id="IPR037230">
    <property type="entry name" value="NSP8_sf_CoV"/>
</dbReference>
<dbReference type="InterPro" id="IPR014822">
    <property type="entry name" value="NSP9_CoV"/>
</dbReference>
<dbReference type="InterPro" id="IPR036499">
    <property type="entry name" value="NSP9_sf_CoV"/>
</dbReference>
<dbReference type="InterPro" id="IPR002705">
    <property type="entry name" value="Pept_C30/C16_B_coronavir"/>
</dbReference>
<dbReference type="InterPro" id="IPR013016">
    <property type="entry name" value="Peptidase_C16_CoV"/>
</dbReference>
<dbReference type="InterPro" id="IPR008740">
    <property type="entry name" value="Peptidase_C30_CoV"/>
</dbReference>
<dbReference type="InterPro" id="IPR043477">
    <property type="entry name" value="Peptidase_C30_dom3_CoV"/>
</dbReference>
<dbReference type="InterPro" id="IPR009003">
    <property type="entry name" value="Peptidase_S1_PA"/>
</dbReference>
<dbReference type="InterPro" id="IPR043504">
    <property type="entry name" value="Peptidase_S1_PA_chymotrypsin"/>
</dbReference>
<dbReference type="InterPro" id="IPR043177">
    <property type="entry name" value="PLpro_N_sf_CoV"/>
</dbReference>
<dbReference type="InterPro" id="IPR043503">
    <property type="entry name" value="PLpro_palm_finger_dom_CoV"/>
</dbReference>
<dbReference type="InterPro" id="IPR043178">
    <property type="entry name" value="PLpro_thumb_sf_CoV"/>
</dbReference>
<dbReference type="InterPro" id="IPR018995">
    <property type="entry name" value="RNA_synth_NSP10_CoV"/>
</dbReference>
<dbReference type="Pfam" id="PF11963">
    <property type="entry name" value="B-CoV_A_NSP1"/>
    <property type="match status" value="1"/>
</dbReference>
<dbReference type="Pfam" id="PF16251">
    <property type="entry name" value="bCoV_NAB"/>
    <property type="match status" value="1"/>
</dbReference>
<dbReference type="Pfam" id="PF09401">
    <property type="entry name" value="CoV_NSP10"/>
    <property type="match status" value="1"/>
</dbReference>
<dbReference type="Pfam" id="PF19218">
    <property type="entry name" value="CoV_NSP3_C"/>
    <property type="match status" value="1"/>
</dbReference>
<dbReference type="Pfam" id="PF16348">
    <property type="entry name" value="CoV_NSP4_C"/>
    <property type="match status" value="1"/>
</dbReference>
<dbReference type="Pfam" id="PF19217">
    <property type="entry name" value="CoV_NSP4_N"/>
    <property type="match status" value="1"/>
</dbReference>
<dbReference type="Pfam" id="PF19213">
    <property type="entry name" value="CoV_NSP6"/>
    <property type="match status" value="1"/>
</dbReference>
<dbReference type="Pfam" id="PF08716">
    <property type="entry name" value="CoV_NSP7"/>
    <property type="match status" value="1"/>
</dbReference>
<dbReference type="Pfam" id="PF08717">
    <property type="entry name" value="CoV_NSP8"/>
    <property type="match status" value="1"/>
</dbReference>
<dbReference type="Pfam" id="PF08710">
    <property type="entry name" value="CoV_NSP9"/>
    <property type="match status" value="1"/>
</dbReference>
<dbReference type="Pfam" id="PF08715">
    <property type="entry name" value="CoV_peptidase"/>
    <property type="match status" value="1"/>
</dbReference>
<dbReference type="Pfam" id="PF01661">
    <property type="entry name" value="Macro"/>
    <property type="match status" value="1"/>
</dbReference>
<dbReference type="Pfam" id="PF22104">
    <property type="entry name" value="MHV_Nsp3_DPUP"/>
    <property type="match status" value="1"/>
</dbReference>
<dbReference type="Pfam" id="PF01831">
    <property type="entry name" value="Peptidase_C16"/>
    <property type="match status" value="1"/>
</dbReference>
<dbReference type="Pfam" id="PF05409">
    <property type="entry name" value="Peptidase_C30"/>
    <property type="match status" value="1"/>
</dbReference>
<dbReference type="SMART" id="SM00506">
    <property type="entry name" value="A1pp"/>
    <property type="match status" value="1"/>
</dbReference>
<dbReference type="SUPFAM" id="SSF144246">
    <property type="entry name" value="Coronavirus NSP10-like"/>
    <property type="match status" value="1"/>
</dbReference>
<dbReference type="SUPFAM" id="SSF140367">
    <property type="entry name" value="Coronavirus NSP7-like"/>
    <property type="match status" value="1"/>
</dbReference>
<dbReference type="SUPFAM" id="SSF143076">
    <property type="entry name" value="Coronavirus NSP8-like"/>
    <property type="match status" value="1"/>
</dbReference>
<dbReference type="SUPFAM" id="SSF52949">
    <property type="entry name" value="Macro domain-like"/>
    <property type="match status" value="1"/>
</dbReference>
<dbReference type="SUPFAM" id="SSF159936">
    <property type="entry name" value="NSP3A-like"/>
    <property type="match status" value="1"/>
</dbReference>
<dbReference type="SUPFAM" id="SSF101816">
    <property type="entry name" value="Replicase NSP9"/>
    <property type="match status" value="1"/>
</dbReference>
<dbReference type="SUPFAM" id="SSF50494">
    <property type="entry name" value="Trypsin-like serine proteases"/>
    <property type="match status" value="1"/>
</dbReference>
<dbReference type="PROSITE" id="PS51963">
    <property type="entry name" value="BCOV_NSP1_C"/>
    <property type="match status" value="1"/>
</dbReference>
<dbReference type="PROSITE" id="PS51942">
    <property type="entry name" value="BCOV_NSP3C_C"/>
    <property type="match status" value="1"/>
</dbReference>
<dbReference type="PROSITE" id="PS51994">
    <property type="entry name" value="BCOV_NSP3E_G2M"/>
    <property type="match status" value="1"/>
</dbReference>
<dbReference type="PROSITE" id="PS51945">
    <property type="entry name" value="BCOV_NSP3E_NAB"/>
    <property type="match status" value="1"/>
</dbReference>
<dbReference type="PROSITE" id="PS51993">
    <property type="entry name" value="COV_3ECTO"/>
    <property type="match status" value="1"/>
</dbReference>
<dbReference type="PROSITE" id="PS51952">
    <property type="entry name" value="COV_EXON_MTASE_COACT"/>
    <property type="match status" value="1"/>
</dbReference>
<dbReference type="PROSITE" id="PS51962">
    <property type="entry name" value="COV_NSP1"/>
    <property type="match status" value="1"/>
</dbReference>
<dbReference type="PROSITE" id="PS51991">
    <property type="entry name" value="COV_NSP2_C"/>
    <property type="match status" value="1"/>
</dbReference>
<dbReference type="PROSITE" id="PS51990">
    <property type="entry name" value="COV_NSP2_M"/>
    <property type="match status" value="1"/>
</dbReference>
<dbReference type="PROSITE" id="PS51989">
    <property type="entry name" value="COV_NSP2_N"/>
    <property type="match status" value="1"/>
</dbReference>
<dbReference type="PROSITE" id="PS51992">
    <property type="entry name" value="COV_NSP3_Y"/>
    <property type="match status" value="1"/>
</dbReference>
<dbReference type="PROSITE" id="PS51943">
    <property type="entry name" value="COV_NSP3A_UBL"/>
    <property type="match status" value="1"/>
</dbReference>
<dbReference type="PROSITE" id="PS51944">
    <property type="entry name" value="COV_NSP3D_UBL"/>
    <property type="match status" value="1"/>
</dbReference>
<dbReference type="PROSITE" id="PS51946">
    <property type="entry name" value="COV_NSP4C"/>
    <property type="match status" value="1"/>
</dbReference>
<dbReference type="PROSITE" id="PS51949">
    <property type="entry name" value="COV_NSP7"/>
    <property type="match status" value="1"/>
</dbReference>
<dbReference type="PROSITE" id="PS51950">
    <property type="entry name" value="COV_NSP8"/>
    <property type="match status" value="1"/>
</dbReference>
<dbReference type="PROSITE" id="PS51951">
    <property type="entry name" value="COV_NSP9_SSRNA_BD"/>
    <property type="match status" value="1"/>
</dbReference>
<dbReference type="PROSITE" id="PS51442">
    <property type="entry name" value="M_PRO"/>
    <property type="match status" value="1"/>
</dbReference>
<dbReference type="PROSITE" id="PS51154">
    <property type="entry name" value="MACRO"/>
    <property type="match status" value="1"/>
</dbReference>
<dbReference type="PROSITE" id="PS51124">
    <property type="entry name" value="PEPTIDASE_C16"/>
    <property type="match status" value="2"/>
</dbReference>
<evidence type="ECO:0000250" key="1"/>
<evidence type="ECO:0000250" key="2">
    <source>
        <dbReference type="UniProtKB" id="P0DTC1"/>
    </source>
</evidence>
<evidence type="ECO:0000255" key="3"/>
<evidence type="ECO:0000255" key="4">
    <source>
        <dbReference type="PROSITE-ProRule" id="PRU00214"/>
    </source>
</evidence>
<evidence type="ECO:0000255" key="5">
    <source>
        <dbReference type="PROSITE-ProRule" id="PRU00444"/>
    </source>
</evidence>
<evidence type="ECO:0000255" key="6">
    <source>
        <dbReference type="PROSITE-ProRule" id="PRU00490"/>
    </source>
</evidence>
<evidence type="ECO:0000255" key="7">
    <source>
        <dbReference type="PROSITE-ProRule" id="PRU00772"/>
    </source>
</evidence>
<evidence type="ECO:0000255" key="8">
    <source>
        <dbReference type="PROSITE-ProRule" id="PRU01289"/>
    </source>
</evidence>
<evidence type="ECO:0000255" key="9">
    <source>
        <dbReference type="PROSITE-ProRule" id="PRU01290"/>
    </source>
</evidence>
<evidence type="ECO:0000255" key="10">
    <source>
        <dbReference type="PROSITE-ProRule" id="PRU01291"/>
    </source>
</evidence>
<evidence type="ECO:0000255" key="11">
    <source>
        <dbReference type="PROSITE-ProRule" id="PRU01294"/>
    </source>
</evidence>
<evidence type="ECO:0000255" key="12">
    <source>
        <dbReference type="PROSITE-ProRule" id="PRU01295"/>
    </source>
</evidence>
<evidence type="ECO:0000255" key="13">
    <source>
        <dbReference type="PROSITE-ProRule" id="PRU01296"/>
    </source>
</evidence>
<evidence type="ECO:0000255" key="14">
    <source>
        <dbReference type="PROSITE-ProRule" id="PRU01297"/>
    </source>
</evidence>
<evidence type="ECO:0000255" key="15">
    <source>
        <dbReference type="PROSITE-ProRule" id="PRU01307"/>
    </source>
</evidence>
<evidence type="ECO:0000255" key="16">
    <source>
        <dbReference type="PROSITE-ProRule" id="PRU01308"/>
    </source>
</evidence>
<evidence type="ECO:0000255" key="17">
    <source>
        <dbReference type="PROSITE-ProRule" id="PRU01333"/>
    </source>
</evidence>
<evidence type="ECO:0000255" key="18">
    <source>
        <dbReference type="PROSITE-ProRule" id="PRU01334"/>
    </source>
</evidence>
<evidence type="ECO:0000255" key="19">
    <source>
        <dbReference type="PROSITE-ProRule" id="PRU01335"/>
    </source>
</evidence>
<evidence type="ECO:0000255" key="20">
    <source>
        <dbReference type="PROSITE-ProRule" id="PRU01336"/>
    </source>
</evidence>
<evidence type="ECO:0000255" key="21">
    <source>
        <dbReference type="PROSITE-ProRule" id="PRU01337"/>
    </source>
</evidence>
<evidence type="ECO:0000255" key="22">
    <source>
        <dbReference type="PROSITE-ProRule" id="PRU01338"/>
    </source>
</evidence>
<evidence type="ECO:0000305" key="23"/>
<reference key="1">
    <citation type="journal article" date="2001" name="J. Gen. Virol.">
        <title>Comparison of genomic and predicted amino acid sequences of respiratory and enteric bovine coronaviruses isolated from the same animal with fatal shipping pneumonia.</title>
        <authorList>
            <person name="Chouljenko V.N."/>
            <person name="Lin X.Q."/>
            <person name="Storz J."/>
            <person name="Kousoulas K.G."/>
            <person name="Gorbalenya A.E."/>
        </authorList>
    </citation>
    <scope>NUCLEOTIDE SEQUENCE [GENOMIC RNA]</scope>
</reference>
<name>R1A_CVBEN</name>
<feature type="chain" id="PRO_0000338134" description="Replicase polyprotein 1a">
    <location>
        <begin position="1"/>
        <end position="4383"/>
    </location>
</feature>
<feature type="chain" id="PRO_0000338135" description="Non-structural protein 1" evidence="1">
    <location>
        <begin position="1"/>
        <end position="246"/>
    </location>
</feature>
<feature type="chain" id="PRO_0000338136" description="Non-structural protein 2" evidence="1">
    <location>
        <begin position="247"/>
        <end position="851"/>
    </location>
</feature>
<feature type="chain" id="PRO_0000338137" description="Papain-like protease nsp3" evidence="1">
    <location>
        <begin position="852"/>
        <end position="2750"/>
    </location>
</feature>
<feature type="chain" id="PRO_0000338138" description="Non-structural protein 4" evidence="1">
    <location>
        <begin position="2751"/>
        <end position="3246"/>
    </location>
</feature>
<feature type="chain" id="PRO_0000338139" description="3C-like proteinase nsp5" evidence="1">
    <location>
        <begin position="3247"/>
        <end position="3549"/>
    </location>
</feature>
<feature type="chain" id="PRO_0000338140" description="Non-structural protein 6" evidence="1">
    <location>
        <begin position="3550"/>
        <end position="3836"/>
    </location>
</feature>
<feature type="chain" id="PRO_0000338141" description="Non-structural protein 7" evidence="1">
    <location>
        <begin position="3837"/>
        <end position="3925"/>
    </location>
</feature>
<feature type="chain" id="PRO_0000338142" description="Non-structural protein 8" evidence="1">
    <location>
        <begin position="3926"/>
        <end position="4122"/>
    </location>
</feature>
<feature type="chain" id="PRO_0000338143" description="RNA-capping enzyme subunit nsp9" evidence="1">
    <location>
        <begin position="4123"/>
        <end position="4232"/>
    </location>
</feature>
<feature type="chain" id="PRO_0000338144" description="Non-structural protein 10" evidence="1">
    <location>
        <begin position="4233"/>
        <end position="4369"/>
    </location>
</feature>
<feature type="chain" id="PRO_0000338145" description="Non-structural protein 11" evidence="3">
    <location>
        <begin position="4370"/>
        <end position="4383"/>
    </location>
</feature>
<feature type="transmembrane region" description="Helical" evidence="3">
    <location>
        <begin position="2138"/>
        <end position="2158"/>
    </location>
</feature>
<feature type="transmembrane region" description="Helical" evidence="3">
    <location>
        <begin position="2199"/>
        <end position="2219"/>
    </location>
</feature>
<feature type="transmembrane region" description="Helical" evidence="3">
    <location>
        <begin position="2227"/>
        <end position="2247"/>
    </location>
</feature>
<feature type="transmembrane region" description="Helical" evidence="3">
    <location>
        <begin position="2313"/>
        <end position="2333"/>
    </location>
</feature>
<feature type="transmembrane region" description="Helical" evidence="3">
    <location>
        <begin position="2343"/>
        <end position="2363"/>
    </location>
</feature>
<feature type="transmembrane region" description="Helical" evidence="3">
    <location>
        <begin position="2365"/>
        <end position="2385"/>
    </location>
</feature>
<feature type="transmembrane region" description="Helical" evidence="3">
    <location>
        <begin position="2752"/>
        <end position="2772"/>
    </location>
</feature>
<feature type="transmembrane region" description="Helical" evidence="3">
    <location>
        <begin position="2824"/>
        <end position="2844"/>
    </location>
</feature>
<feature type="transmembrane region" description="Helical" evidence="3">
    <location>
        <begin position="3009"/>
        <end position="3029"/>
    </location>
</feature>
<feature type="transmembrane region" description="Helical" evidence="3">
    <location>
        <begin position="3031"/>
        <end position="3051"/>
    </location>
</feature>
<feature type="transmembrane region" description="Helical" evidence="3">
    <location>
        <begin position="3063"/>
        <end position="3083"/>
    </location>
</feature>
<feature type="transmembrane region" description="Helical" evidence="3">
    <location>
        <begin position="3090"/>
        <end position="3110"/>
    </location>
</feature>
<feature type="transmembrane region" description="Helical" evidence="3">
    <location>
        <begin position="3115"/>
        <end position="3135"/>
    </location>
</feature>
<feature type="transmembrane region" description="Helical" evidence="3">
    <location>
        <begin position="3558"/>
        <end position="3578"/>
    </location>
</feature>
<feature type="transmembrane region" description="Helical" evidence="3">
    <location>
        <begin position="3588"/>
        <end position="3608"/>
    </location>
</feature>
<feature type="transmembrane region" description="Helical" evidence="3">
    <location>
        <begin position="3614"/>
        <end position="3634"/>
    </location>
</feature>
<feature type="transmembrane region" description="Helical" evidence="3">
    <location>
        <begin position="3657"/>
        <end position="3677"/>
    </location>
</feature>
<feature type="transmembrane region" description="Helical" evidence="3">
    <location>
        <begin position="3684"/>
        <end position="3704"/>
    </location>
</feature>
<feature type="transmembrane region" description="Helical" evidence="3">
    <location>
        <begin position="3711"/>
        <end position="3731"/>
    </location>
</feature>
<feature type="transmembrane region" description="Helical" evidence="3">
    <location>
        <begin position="3755"/>
        <end position="3775"/>
    </location>
</feature>
<feature type="domain" description="CoV Nsp1 globular" evidence="15">
    <location>
        <begin position="54"/>
        <end position="196"/>
    </location>
</feature>
<feature type="domain" description="BetaCoV Nsp1 C-terminal" evidence="16">
    <location>
        <begin position="216"/>
        <end position="246"/>
    </location>
</feature>
<feature type="domain" description="CoV Nsp2 N-terminal" evidence="17">
    <location>
        <begin position="250"/>
        <end position="519"/>
    </location>
</feature>
<feature type="domain" description="CoV Nsp2 middle" evidence="18">
    <location>
        <begin position="524"/>
        <end position="713"/>
    </location>
</feature>
<feature type="domain" description="CoV Nsp2 C-terminal" evidence="19">
    <location>
        <begin position="733"/>
        <end position="851"/>
    </location>
</feature>
<feature type="domain" description="Ubiquitin-like 1" evidence="4">
    <location>
        <begin position="853"/>
        <end position="966"/>
    </location>
</feature>
<feature type="domain" description="Peptidase C16 1" evidence="5">
    <location>
        <begin position="1036"/>
        <end position="1274"/>
    </location>
</feature>
<feature type="domain" description="Macro" evidence="6">
    <location>
        <begin position="1275"/>
        <end position="1435"/>
    </location>
</feature>
<feature type="domain" description="DPUP" evidence="8">
    <location>
        <begin position="1491"/>
        <end position="1563"/>
    </location>
</feature>
<feature type="domain" description="Ubiquitin-like 2" evidence="4">
    <location>
        <begin position="1562"/>
        <end position="1617"/>
    </location>
</feature>
<feature type="domain" description="Peptidase C16 2" evidence="5">
    <location>
        <begin position="1631"/>
        <end position="1892"/>
    </location>
</feature>
<feature type="domain" description="Nucleic acid-binding" evidence="9">
    <location>
        <begin position="1906"/>
        <end position="2007"/>
    </location>
</feature>
<feature type="domain" description="G2M" evidence="22">
    <location>
        <begin position="2020"/>
        <end position="2169"/>
    </location>
</feature>
<feature type="domain" description="3Ecto" evidence="21">
    <location>
        <begin position="2235"/>
        <end position="2296"/>
    </location>
</feature>
<feature type="domain" description="CoV Nsp3 Y" evidence="20">
    <location>
        <begin position="2383"/>
        <end position="2750"/>
    </location>
</feature>
<feature type="domain" description="Nsp4C" evidence="10">
    <location>
        <begin position="3149"/>
        <end position="3246"/>
    </location>
</feature>
<feature type="domain" description="Peptidase C30" evidence="7">
    <location>
        <begin position="3247"/>
        <end position="3549"/>
    </location>
</feature>
<feature type="domain" description="RdRp Nsp7 cofactor" evidence="11">
    <location>
        <begin position="3837"/>
        <end position="3925"/>
    </location>
</feature>
<feature type="domain" description="RdRp Nsp8 cofactor" evidence="12">
    <location>
        <begin position="3926"/>
        <end position="4122"/>
    </location>
</feature>
<feature type="domain" description="Nsp9 ssRNA-binding" evidence="13">
    <location>
        <begin position="4123"/>
        <end position="4232"/>
    </location>
</feature>
<feature type="domain" description="ExoN/MTase coactivator" evidence="14">
    <location>
        <begin position="4233"/>
        <end position="4370"/>
    </location>
</feature>
<feature type="zinc finger region" description="C4-type 1" evidence="5">
    <location>
        <begin position="1151"/>
        <end position="1179"/>
    </location>
</feature>
<feature type="zinc finger region" description="C4-type 2" evidence="5">
    <location>
        <begin position="1749"/>
        <end position="1785"/>
    </location>
</feature>
<feature type="zinc finger region" evidence="1">
    <location>
        <begin position="4306"/>
        <end position="4322"/>
    </location>
</feature>
<feature type="zinc finger region" evidence="1">
    <location>
        <begin position="4348"/>
        <end position="4361"/>
    </location>
</feature>
<feature type="region of interest" description="C4" evidence="17">
    <location>
        <begin position="392"/>
        <end position="416"/>
    </location>
</feature>
<feature type="region of interest" description="HD1">
    <location>
        <begin position="2138"/>
        <end position="2385"/>
    </location>
</feature>
<feature type="region of interest" description="Y1" evidence="20">
    <location>
        <begin position="2383"/>
        <end position="2473"/>
    </location>
</feature>
<feature type="region of interest" description="ZF1" evidence="20">
    <location>
        <begin position="2387"/>
        <end position="2400"/>
    </location>
</feature>
<feature type="region of interest" description="ZF2" evidence="20">
    <location>
        <begin position="2433"/>
        <end position="2443"/>
    </location>
</feature>
<feature type="region of interest" description="CoV-Y" evidence="20">
    <location>
        <begin position="2474"/>
        <end position="2750"/>
    </location>
</feature>
<feature type="region of interest" description="Y2" evidence="20">
    <location>
        <begin position="2474"/>
        <end position="2566"/>
    </location>
</feature>
<feature type="region of interest" description="Y3" evidence="20">
    <location>
        <begin position="2567"/>
        <end position="2649"/>
    </location>
</feature>
<feature type="region of interest" description="Y4" evidence="20">
    <location>
        <begin position="2650"/>
        <end position="2750"/>
    </location>
</feature>
<feature type="region of interest" description="HD2">
    <location>
        <begin position="2752"/>
        <end position="3135"/>
    </location>
</feature>
<feature type="region of interest" description="HD3">
    <location>
        <begin position="3558"/>
        <end position="3775"/>
    </location>
</feature>
<feature type="active site" description="For PL1-PRO activity" evidence="5">
    <location>
        <position position="1074"/>
    </location>
</feature>
<feature type="active site" description="For PL1-PRO activity" evidence="5">
    <location>
        <position position="1225"/>
    </location>
</feature>
<feature type="active site" description="For PL1-PRO activity" evidence="5">
    <location>
        <position position="1236"/>
    </location>
</feature>
<feature type="active site" description="For PL2-PRO activity" evidence="5">
    <location>
        <position position="1671"/>
    </location>
</feature>
<feature type="active site" description="For PL2-PRO activity" evidence="5">
    <location>
        <position position="1828"/>
    </location>
</feature>
<feature type="active site" description="For PL2-PRO activity" evidence="5">
    <location>
        <position position="1842"/>
    </location>
</feature>
<feature type="active site" description="For 3CL-PRO activity" evidence="7">
    <location>
        <position position="3287"/>
    </location>
</feature>
<feature type="active site" description="For 3CL-PRO activity" evidence="7">
    <location>
        <position position="3391"/>
    </location>
</feature>
<feature type="binding site" evidence="17">
    <location>
        <position position="392"/>
    </location>
    <ligand>
        <name>Zn(2+)</name>
        <dbReference type="ChEBI" id="CHEBI:29105"/>
        <label>1</label>
    </ligand>
</feature>
<feature type="binding site" evidence="17">
    <location>
        <position position="397"/>
    </location>
    <ligand>
        <name>Zn(2+)</name>
        <dbReference type="ChEBI" id="CHEBI:29105"/>
        <label>1</label>
    </ligand>
</feature>
<feature type="binding site" evidence="17">
    <location>
        <position position="413"/>
    </location>
    <ligand>
        <name>Zn(2+)</name>
        <dbReference type="ChEBI" id="CHEBI:29105"/>
        <label>1</label>
    </ligand>
</feature>
<feature type="binding site" evidence="17">
    <location>
        <position position="416"/>
    </location>
    <ligand>
        <name>Zn(2+)</name>
        <dbReference type="ChEBI" id="CHEBI:29105"/>
        <label>1</label>
    </ligand>
</feature>
<feature type="binding site" evidence="5">
    <location>
        <position position="1151"/>
    </location>
    <ligand>
        <name>Zn(2+)</name>
        <dbReference type="ChEBI" id="CHEBI:29105"/>
        <label>2</label>
    </ligand>
</feature>
<feature type="binding site" evidence="5">
    <location>
        <position position="1154"/>
    </location>
    <ligand>
        <name>Zn(2+)</name>
        <dbReference type="ChEBI" id="CHEBI:29105"/>
        <label>2</label>
    </ligand>
</feature>
<feature type="binding site" evidence="5">
    <location>
        <position position="1177"/>
    </location>
    <ligand>
        <name>Zn(2+)</name>
        <dbReference type="ChEBI" id="CHEBI:29105"/>
        <label>2</label>
    </ligand>
</feature>
<feature type="binding site" evidence="5">
    <location>
        <position position="1179"/>
    </location>
    <ligand>
        <name>Zn(2+)</name>
        <dbReference type="ChEBI" id="CHEBI:29105"/>
        <label>2</label>
    </ligand>
</feature>
<feature type="binding site" evidence="5">
    <location>
        <position position="1749"/>
    </location>
    <ligand>
        <name>Zn(2+)</name>
        <dbReference type="ChEBI" id="CHEBI:29105"/>
        <label>3</label>
    </ligand>
</feature>
<feature type="binding site" evidence="5">
    <location>
        <position position="1751"/>
    </location>
    <ligand>
        <name>Zn(2+)</name>
        <dbReference type="ChEBI" id="CHEBI:29105"/>
        <label>3</label>
    </ligand>
</feature>
<feature type="binding site" evidence="5">
    <location>
        <position position="1783"/>
    </location>
    <ligand>
        <name>Zn(2+)</name>
        <dbReference type="ChEBI" id="CHEBI:29105"/>
        <label>3</label>
    </ligand>
</feature>
<feature type="binding site" evidence="5">
    <location>
        <position position="1785"/>
    </location>
    <ligand>
        <name>Zn(2+)</name>
        <dbReference type="ChEBI" id="CHEBI:29105"/>
        <label>3</label>
    </ligand>
</feature>
<feature type="binding site" evidence="20">
    <location>
        <position position="2387"/>
    </location>
    <ligand>
        <name>Zn(2+)</name>
        <dbReference type="ChEBI" id="CHEBI:29105"/>
        <label>4</label>
    </ligand>
</feature>
<feature type="binding site" evidence="20">
    <location>
        <position position="2392"/>
    </location>
    <ligand>
        <name>Zn(2+)</name>
        <dbReference type="ChEBI" id="CHEBI:29105"/>
        <label>4</label>
    </ligand>
</feature>
<feature type="binding site" evidence="20">
    <location>
        <position position="2397"/>
    </location>
    <ligand>
        <name>Zn(2+)</name>
        <dbReference type="ChEBI" id="CHEBI:29105"/>
        <label>4</label>
    </ligand>
</feature>
<feature type="binding site" evidence="20">
    <location>
        <position position="2400"/>
    </location>
    <ligand>
        <name>Zn(2+)</name>
        <dbReference type="ChEBI" id="CHEBI:29105"/>
        <label>4</label>
    </ligand>
</feature>
<feature type="binding site" evidence="20">
    <location>
        <position position="2433"/>
    </location>
    <ligand>
        <name>Zn(2+)</name>
        <dbReference type="ChEBI" id="CHEBI:29105"/>
        <label>5</label>
    </ligand>
</feature>
<feature type="binding site" evidence="20">
    <location>
        <position position="2436"/>
    </location>
    <ligand>
        <name>Zn(2+)</name>
        <dbReference type="ChEBI" id="CHEBI:29105"/>
        <label>5</label>
    </ligand>
</feature>
<feature type="binding site" evidence="20">
    <location>
        <position position="2440"/>
    </location>
    <ligand>
        <name>Zn(2+)</name>
        <dbReference type="ChEBI" id="CHEBI:29105"/>
        <label>5</label>
    </ligand>
</feature>
<feature type="binding site" evidence="20">
    <location>
        <position position="2443"/>
    </location>
    <ligand>
        <name>Zn(2+)</name>
        <dbReference type="ChEBI" id="CHEBI:29105"/>
        <label>5</label>
    </ligand>
</feature>
<feature type="binding site" evidence="14">
    <location>
        <position position="4306"/>
    </location>
    <ligand>
        <name>Zn(2+)</name>
        <dbReference type="ChEBI" id="CHEBI:29105"/>
        <label>6</label>
    </ligand>
</feature>
<feature type="binding site" evidence="14">
    <location>
        <position position="4309"/>
    </location>
    <ligand>
        <name>Zn(2+)</name>
        <dbReference type="ChEBI" id="CHEBI:29105"/>
        <label>6</label>
    </ligand>
</feature>
<feature type="binding site" evidence="14">
    <location>
        <position position="4315"/>
    </location>
    <ligand>
        <name>Zn(2+)</name>
        <dbReference type="ChEBI" id="CHEBI:29105"/>
        <label>6</label>
    </ligand>
</feature>
<feature type="binding site" evidence="14">
    <location>
        <position position="4322"/>
    </location>
    <ligand>
        <name>Zn(2+)</name>
        <dbReference type="ChEBI" id="CHEBI:29105"/>
        <label>6</label>
    </ligand>
</feature>
<feature type="binding site" evidence="14">
    <location>
        <position position="4348"/>
    </location>
    <ligand>
        <name>Zn(2+)</name>
        <dbReference type="ChEBI" id="CHEBI:29105"/>
        <label>7</label>
    </ligand>
</feature>
<feature type="binding site" evidence="14">
    <location>
        <position position="4351"/>
    </location>
    <ligand>
        <name>Zn(2+)</name>
        <dbReference type="ChEBI" id="CHEBI:29105"/>
        <label>7</label>
    </ligand>
</feature>
<feature type="binding site" evidence="14">
    <location>
        <position position="4359"/>
    </location>
    <ligand>
        <name>Zn(2+)</name>
        <dbReference type="ChEBI" id="CHEBI:29105"/>
        <label>7</label>
    </ligand>
</feature>
<feature type="binding site" evidence="14">
    <location>
        <position position="4361"/>
    </location>
    <ligand>
        <name>Zn(2+)</name>
        <dbReference type="ChEBI" id="CHEBI:29105"/>
        <label>7</label>
    </ligand>
</feature>
<feature type="site" description="Cleavage; by PL1-PRO" evidence="1">
    <location>
        <begin position="246"/>
        <end position="247"/>
    </location>
</feature>
<feature type="site" description="Cleavage; by PL1-PRO" evidence="1">
    <location>
        <begin position="851"/>
        <end position="852"/>
    </location>
</feature>
<feature type="site" description="Cleavage; by PL2-PRO" evidence="1">
    <location>
        <begin position="2750"/>
        <end position="2751"/>
    </location>
</feature>
<feature type="site" description="Cleavage; by 3CL-PRO" evidence="1">
    <location>
        <begin position="3246"/>
        <end position="3247"/>
    </location>
</feature>
<feature type="site" description="Cleavage; by 3CL-PRO" evidence="1">
    <location>
        <begin position="3549"/>
        <end position="3550"/>
    </location>
</feature>
<feature type="site" description="Cleavage; by 3CL-PRO" evidence="1">
    <location>
        <begin position="3836"/>
        <end position="3837"/>
    </location>
</feature>
<feature type="site" description="Cleavage; by 3CL-PRO" evidence="1">
    <location>
        <begin position="3925"/>
        <end position="3926"/>
    </location>
</feature>
<feature type="site" description="Cleavage; by 3CL-PRO" evidence="1">
    <location>
        <begin position="4122"/>
        <end position="4123"/>
    </location>
</feature>
<feature type="site" description="Cleavage; by 3CL-PRO" evidence="1">
    <location>
        <begin position="4232"/>
        <end position="4233"/>
    </location>
</feature>
<feature type="site" description="Cleavage; by 3CL-PRO" evidence="1">
    <location>
        <begin position="4369"/>
        <end position="4370"/>
    </location>
</feature>
<feature type="disulfide bond" evidence="21">
    <location>
        <begin position="2251"/>
        <end position="2275"/>
    </location>
</feature>
<feature type="disulfide bond" evidence="21">
    <location>
        <begin position="2266"/>
        <end position="2272"/>
    </location>
</feature>
<gene>
    <name type="ORF">1a</name>
</gene>
<comment type="function">
    <text evidence="1">The papain-like proteinase 1 (PL1-PRO) and papain-like proteinase 2 (PL2-PRO) are responsible for the cleavages located at the N-terminus of the replicase polyprotein. In addition, PLP2 possesses a deubiquitinating/deISGylating activity and processes both 'Lys-48'- and 'Lys-63'-linked polyubiquitin chains from cellular substrates. Antagonizes innate immune induction of type I interferon by blocking the phosphorylation, dimerization and subsequent nuclear translocation of host IRF-3 (By similarity).</text>
</comment>
<comment type="function">
    <molecule>3C-like proteinase nsp5</molecule>
    <text evidence="7">Responsible for the majority of cleavages as it cleaves the C-terminus of replicase polyprotein at 11 sites. Recognizes substrates containing the core sequence [ILMVF]-Q-|-[SGACN]. Inhibited by the substrate-analog Cbz-Val-Asn-Ser-Thr-Leu-Gln-CMK. Also contains an ADP-ribose-1''-phosphate (ADRP)-binding function (By similarity).</text>
</comment>
<comment type="function">
    <text evidence="1">Nsp7-nsp8 hexadecamer may possibly confer processivity to the polymerase, maybe by binding to dsRNA or by producing primers utilized by the latter.</text>
</comment>
<comment type="function">
    <molecule>RNA-capping enzyme subunit nsp9</molecule>
    <text evidence="2">Catalytic subunit of viral RNA capping enzyme which catalyzes the RNA guanylyltransferase reaction for genomic and sub-genomic RNAs. The kinase-like NiRAN domain of NSP12 transfers RNA to the amino terminus of NSP9, forming a covalent RNA-protein intermediate. Subsequently, the NiRAN domain transfers RNA to GDP, forming the core cap structure GpppA-RNA. The NSP14 and NSP16 methyltransferases then add methyl groups to form functional cap structures.</text>
</comment>
<comment type="function">
    <molecule>Non-structural protein 1</molecule>
    <text evidence="1">Binds to the 40S ribosomal subunit and inhibits host translation. The nsp1-40S ribosome complex further induces an endonucleolytic cleavage near the 5'UTR of host mRNAs, targeting them for degradation. By suppressing host gene expression, nsp1 facilitates efficient viral gene expression in infected cells and evasion from host immune response (By similarity).</text>
</comment>
<comment type="catalytic activity">
    <molecule>Papain-like protease nsp3</molecule>
    <reaction evidence="2">
        <text>Thiol-dependent hydrolysis of ester, thioester, amide, peptide and isopeptide bonds formed by the C-terminal Gly of ubiquitin (a 76-residue protein attached to proteins as an intracellular targeting signal).</text>
        <dbReference type="EC" id="3.4.19.12"/>
    </reaction>
</comment>
<comment type="catalytic activity">
    <molecule>3C-like proteinase nsp5</molecule>
    <reaction evidence="2">
        <text>TSAVLQ-|-SGFRK-NH2 and SGVTFQ-|-GKFKK the two peptides corresponding to the two self-cleavage sites of the SARS 3C-like proteinase are the two most reactive peptide substrates. The enzyme exhibits a strong preference for substrates containing Gln at P1 position and Leu at P2 position.</text>
        <dbReference type="EC" id="3.4.22.69"/>
    </reaction>
</comment>
<comment type="catalytic activity">
    <molecule>RNA-capping enzyme subunit nsp9</molecule>
    <reaction evidence="2">
        <text>a 5'-end diphospho-ribonucleoside in mRNA + GTP + H(+) = a 5'-end (5'-triphosphoguanosine)-ribonucleoside in mRNA + diphosphate</text>
        <dbReference type="Rhea" id="RHEA:67012"/>
        <dbReference type="Rhea" id="RHEA-COMP:17165"/>
        <dbReference type="Rhea" id="RHEA-COMP:17166"/>
        <dbReference type="ChEBI" id="CHEBI:15378"/>
        <dbReference type="ChEBI" id="CHEBI:33019"/>
        <dbReference type="ChEBI" id="CHEBI:37565"/>
        <dbReference type="ChEBI" id="CHEBI:167616"/>
        <dbReference type="ChEBI" id="CHEBI:167617"/>
        <dbReference type="EC" id="2.7.7.50"/>
    </reaction>
    <physiologicalReaction direction="right-to-left" evidence="2">
        <dbReference type="Rhea" id="RHEA:67014"/>
    </physiologicalReaction>
</comment>
<comment type="subunit">
    <text evidence="1">3CL-PRO exists as monomer and homodimer. Eight copies of nsp7 and eight copies of nsp8 assemble to form a heterohexadecamer. Nsp9 is a dimer. Nsp10 forms a dodecamer (By similarity).</text>
</comment>
<comment type="subcellular location">
    <molecule>Papain-like protease nsp3</molecule>
    <subcellularLocation>
        <location evidence="23">Host membrane</location>
        <topology evidence="23">Multi-pass membrane protein</topology>
    </subcellularLocation>
</comment>
<comment type="subcellular location">
    <molecule>Non-structural protein 4</molecule>
    <subcellularLocation>
        <location evidence="23">Host membrane</location>
        <topology evidence="23">Multi-pass membrane protein</topology>
    </subcellularLocation>
</comment>
<comment type="subcellular location">
    <molecule>Non-structural protein 6</molecule>
    <subcellularLocation>
        <location evidence="23">Host membrane</location>
        <topology evidence="23">Multi-pass membrane protein</topology>
    </subcellularLocation>
</comment>
<comment type="subcellular location">
    <molecule>Non-structural protein 7</molecule>
    <subcellularLocation>
        <location evidence="1">Host cytoplasm</location>
        <location evidence="1">Host perinuclear region</location>
    </subcellularLocation>
    <text evidence="1">nsp7, nsp8, nsp9 and nsp10 are localized in cytoplasmic foci, largely perinuclear. Late in infection, they merge into confluent complexes (By similarity).</text>
</comment>
<comment type="subcellular location">
    <molecule>Non-structural protein 8</molecule>
    <subcellularLocation>
        <location evidence="1">Host cytoplasm</location>
        <location evidence="1">Host perinuclear region</location>
    </subcellularLocation>
    <text evidence="1">nsp7, nsp8, nsp9 and nsp10 are localized in cytoplasmic foci, largely perinuclear. Late in infection, they merge into confluent complexes (By similarity).</text>
</comment>
<comment type="subcellular location">
    <molecule>RNA-capping enzyme subunit nsp9</molecule>
    <subcellularLocation>
        <location evidence="1">Host cytoplasm</location>
        <location evidence="1">Host perinuclear region</location>
    </subcellularLocation>
    <text evidence="1">nsp7, nsp8, nsp9 and nsp10 are localized in cytoplasmic foci, largely perinuclear. Late in infection, they merge into confluent complexes (By similarity).</text>
</comment>
<comment type="subcellular location">
    <molecule>Non-structural protein 10</molecule>
    <subcellularLocation>
        <location evidence="1">Host cytoplasm</location>
        <location evidence="1">Host perinuclear region</location>
    </subcellularLocation>
    <text evidence="1">nsp7, nsp8, nsp9 and nsp10 are localized in cytoplasmic foci, largely perinuclear. Late in infection, they merge into confluent complexes (By similarity).</text>
</comment>
<comment type="alternative products">
    <event type="ribosomal frameshifting"/>
    <isoform>
        <id>P0C6T8-1</id>
        <name>Replicase polyprotein 1a</name>
        <name>pp1a</name>
        <name>ORF1a polyprotein</name>
        <sequence type="displayed"/>
    </isoform>
    <isoform>
        <id>P0C6W7-1</id>
        <name>Replicase polyprotein 1ab</name>
        <name>pp1ab</name>
        <sequence type="external"/>
    </isoform>
</comment>
<comment type="domain">
    <text>The hydrophobic domains (HD) could mediate the membrane association of the replication complex and thereby alter the architecture of the host cell membrane.</text>
</comment>
<comment type="PTM">
    <text evidence="1">Specific enzymatic cleavages in vivo by its own proteases yield mature proteins. 3CL-PRO and PL-PRO proteinases are autocatalytically processed (By similarity).</text>
</comment>
<comment type="miscellaneous">
    <molecule>Isoform Replicase polyprotein 1a</molecule>
    <text>Produced by conventional translation.</text>
</comment>
<comment type="similarity">
    <text evidence="23">Belongs to the coronaviruses polyprotein 1ab family.</text>
</comment>
<protein>
    <recommendedName>
        <fullName>Replicase polyprotein 1a</fullName>
        <shortName>pp1a</shortName>
    </recommendedName>
    <alternativeName>
        <fullName>ORF1a polyprotein</fullName>
    </alternativeName>
    <component>
        <recommendedName>
            <fullName>Non-structural protein 1</fullName>
            <shortName>nsp1</shortName>
        </recommendedName>
        <alternativeName>
            <fullName>p28</fullName>
        </alternativeName>
    </component>
    <component>
        <recommendedName>
            <fullName>Non-structural protein 2</fullName>
            <shortName>nsp2</shortName>
        </recommendedName>
        <alternativeName>
            <fullName>p65</fullName>
        </alternativeName>
    </component>
    <component>
        <recommendedName>
            <fullName>Papain-like protease nsp3</fullName>
            <shortName>PL-PRO</shortName>
            <ecNumber>3.4.19.12</ecNumber>
            <ecNumber>3.4.22.-</ecNumber>
        </recommendedName>
        <alternativeName>
            <fullName>Non-structural protein 3</fullName>
            <shortName>nsp3</shortName>
        </alternativeName>
        <alternativeName>
            <fullName>PL1-PRO/PL2-PRO</fullName>
        </alternativeName>
        <alternativeName>
            <fullName>PL1/PL2</fullName>
        </alternativeName>
        <alternativeName>
            <fullName>PL2-PRO</fullName>
        </alternativeName>
        <alternativeName>
            <fullName>Papain-like proteinases 1/2</fullName>
        </alternativeName>
        <alternativeName>
            <fullName>p210</fullName>
        </alternativeName>
    </component>
    <component>
        <recommendedName>
            <fullName>Non-structural protein 4</fullName>
            <shortName>nsp4</shortName>
        </recommendedName>
        <alternativeName>
            <fullName>Peptide HD2</fullName>
        </alternativeName>
        <alternativeName>
            <fullName>p44</fullName>
        </alternativeName>
    </component>
    <component>
        <recommendedName>
            <fullName>3C-like proteinase nsp5</fullName>
            <shortName>3CL-PRO</shortName>
            <shortName>3CLp</shortName>
            <ecNumber>3.4.22.69</ecNumber>
        </recommendedName>
        <alternativeName>
            <fullName>M-PRO</fullName>
        </alternativeName>
        <alternativeName>
            <fullName>nsp5</fullName>
        </alternativeName>
        <alternativeName>
            <fullName>p27</fullName>
        </alternativeName>
    </component>
    <component>
        <recommendedName>
            <fullName>Non-structural protein 6</fullName>
            <shortName>nsp6</shortName>
        </recommendedName>
    </component>
    <component>
        <recommendedName>
            <fullName>Non-structural protein 7</fullName>
            <shortName>nsp7</shortName>
        </recommendedName>
        <alternativeName>
            <fullName>p10</fullName>
        </alternativeName>
    </component>
    <component>
        <recommendedName>
            <fullName>Non-structural protein 8</fullName>
            <shortName>nsp8</shortName>
        </recommendedName>
        <alternativeName>
            <fullName>p22</fullName>
        </alternativeName>
    </component>
    <component>
        <recommendedName>
            <fullName>RNA-capping enzyme subunit nsp9</fullName>
        </recommendedName>
        <alternativeName>
            <fullName>Non-structural protein 9</fullName>
            <shortName>nsp9</shortName>
            <ecNumber>2.7.7.50</ecNumber>
        </alternativeName>
        <alternativeName>
            <fullName>p12</fullName>
        </alternativeName>
    </component>
    <component>
        <recommendedName>
            <fullName>Non-structural protein 10</fullName>
            <shortName>nsp10</shortName>
        </recommendedName>
        <alternativeName>
            <fullName>Growth factor-like peptide</fullName>
            <shortName>GFL</shortName>
        </alternativeName>
        <alternativeName>
            <fullName>p15</fullName>
        </alternativeName>
    </component>
    <component>
        <recommendedName>
            <fullName>Non-structural protein 11</fullName>
            <shortName>nsp11</shortName>
        </recommendedName>
    </component>
</protein>
<organism>
    <name type="scientific">Bovine coronavirus (strain 98TXSF-110-ENT)</name>
    <name type="common">BCoV-ENT</name>
    <name type="synonym">BCV</name>
    <dbReference type="NCBI Taxonomy" id="233262"/>
    <lineage>
        <taxon>Viruses</taxon>
        <taxon>Riboviria</taxon>
        <taxon>Orthornavirae</taxon>
        <taxon>Pisuviricota</taxon>
        <taxon>Pisoniviricetes</taxon>
        <taxon>Nidovirales</taxon>
        <taxon>Cornidovirineae</taxon>
        <taxon>Coronaviridae</taxon>
        <taxon>Orthocoronavirinae</taxon>
        <taxon>Betacoronavirus</taxon>
        <taxon>Embecovirus</taxon>
        <taxon>Betacoronavirus 1</taxon>
    </lineage>
</organism>